<gene>
    <name evidence="1" type="primary">iolA1</name>
    <name type="ordered locus">BA_2354</name>
    <name type="ordered locus">GBAA_2354</name>
    <name type="ordered locus">BAS2193</name>
</gene>
<reference key="1">
    <citation type="journal article" date="2003" name="Nature">
        <title>The genome sequence of Bacillus anthracis Ames and comparison to closely related bacteria.</title>
        <authorList>
            <person name="Read T.D."/>
            <person name="Peterson S.N."/>
            <person name="Tourasse N.J."/>
            <person name="Baillie L.W."/>
            <person name="Paulsen I.T."/>
            <person name="Nelson K.E."/>
            <person name="Tettelin H."/>
            <person name="Fouts D.E."/>
            <person name="Eisen J.A."/>
            <person name="Gill S.R."/>
            <person name="Holtzapple E.K."/>
            <person name="Okstad O.A."/>
            <person name="Helgason E."/>
            <person name="Rilstone J."/>
            <person name="Wu M."/>
            <person name="Kolonay J.F."/>
            <person name="Beanan M.J."/>
            <person name="Dodson R.J."/>
            <person name="Brinkac L.M."/>
            <person name="Gwinn M.L."/>
            <person name="DeBoy R.T."/>
            <person name="Madpu R."/>
            <person name="Daugherty S.C."/>
            <person name="Durkin A.S."/>
            <person name="Haft D.H."/>
            <person name="Nelson W.C."/>
            <person name="Peterson J.D."/>
            <person name="Pop M."/>
            <person name="Khouri H.M."/>
            <person name="Radune D."/>
            <person name="Benton J.L."/>
            <person name="Mahamoud Y."/>
            <person name="Jiang L."/>
            <person name="Hance I.R."/>
            <person name="Weidman J.F."/>
            <person name="Berry K.J."/>
            <person name="Plaut R.D."/>
            <person name="Wolf A.M."/>
            <person name="Watkins K.L."/>
            <person name="Nierman W.C."/>
            <person name="Hazen A."/>
            <person name="Cline R.T."/>
            <person name="Redmond C."/>
            <person name="Thwaite J.E."/>
            <person name="White O."/>
            <person name="Salzberg S.L."/>
            <person name="Thomason B."/>
            <person name="Friedlander A.M."/>
            <person name="Koehler T.M."/>
            <person name="Hanna P.C."/>
            <person name="Kolstoe A.-B."/>
            <person name="Fraser C.M."/>
        </authorList>
    </citation>
    <scope>NUCLEOTIDE SEQUENCE [LARGE SCALE GENOMIC DNA]</scope>
    <source>
        <strain>Ames / isolate Porton</strain>
    </source>
</reference>
<reference key="2">
    <citation type="submission" date="2004-01" db="EMBL/GenBank/DDBJ databases">
        <title>Complete genome sequence of Bacillus anthracis Sterne.</title>
        <authorList>
            <person name="Brettin T.S."/>
            <person name="Bruce D."/>
            <person name="Challacombe J.F."/>
            <person name="Gilna P."/>
            <person name="Han C."/>
            <person name="Hill K."/>
            <person name="Hitchcock P."/>
            <person name="Jackson P."/>
            <person name="Keim P."/>
            <person name="Longmire J."/>
            <person name="Lucas S."/>
            <person name="Okinaka R."/>
            <person name="Richardson P."/>
            <person name="Rubin E."/>
            <person name="Tice H."/>
        </authorList>
    </citation>
    <scope>NUCLEOTIDE SEQUENCE [LARGE SCALE GENOMIC DNA]</scope>
    <source>
        <strain>Sterne</strain>
    </source>
</reference>
<reference key="3">
    <citation type="journal article" date="2009" name="J. Bacteriol.">
        <title>The complete genome sequence of Bacillus anthracis Ames 'Ancestor'.</title>
        <authorList>
            <person name="Ravel J."/>
            <person name="Jiang L."/>
            <person name="Stanley S.T."/>
            <person name="Wilson M.R."/>
            <person name="Decker R.S."/>
            <person name="Read T.D."/>
            <person name="Worsham P."/>
            <person name="Keim P.S."/>
            <person name="Salzberg S.L."/>
            <person name="Fraser-Liggett C.M."/>
            <person name="Rasko D.A."/>
        </authorList>
    </citation>
    <scope>NUCLEOTIDE SEQUENCE [LARGE SCALE GENOMIC DNA]</scope>
    <source>
        <strain>Ames ancestor</strain>
    </source>
</reference>
<name>IOLA1_BACAN</name>
<protein>
    <recommendedName>
        <fullName evidence="1">Malonate-semialdehyde dehydrogenase 1</fullName>
        <shortName evidence="1">MSA dehydrogenase 1</shortName>
        <ecNumber evidence="1">1.2.1.27</ecNumber>
    </recommendedName>
    <alternativeName>
        <fullName evidence="1">Methylmalonate-semialdehyde dehydrogenase 1</fullName>
        <shortName evidence="1">MMSA dehydrogenase 1</shortName>
        <shortName evidence="1">MSDH 1</shortName>
    </alternativeName>
</protein>
<evidence type="ECO:0000255" key="1">
    <source>
        <dbReference type="HAMAP-Rule" id="MF_01670"/>
    </source>
</evidence>
<keyword id="KW-0520">NAD</keyword>
<keyword id="KW-0560">Oxidoreductase</keyword>
<keyword id="KW-1185">Reference proteome</keyword>
<comment type="function">
    <text evidence="1">Catalyzes the oxidation of malonate semialdehyde (MSA) and methylmalonate semialdehyde (MMSA) into acetyl-CoA and propanoyl-CoA, respectively. Is involved in a myo-inositol catabolic pathway. Bicarbonate, and not CO2, is the end-product of the enzymatic reaction.</text>
</comment>
<comment type="catalytic activity">
    <reaction evidence="1">
        <text>3-oxopropanoate + NAD(+) + CoA + H2O = hydrogencarbonate + acetyl-CoA + NADH + H(+)</text>
        <dbReference type="Rhea" id="RHEA:76615"/>
        <dbReference type="ChEBI" id="CHEBI:15377"/>
        <dbReference type="ChEBI" id="CHEBI:15378"/>
        <dbReference type="ChEBI" id="CHEBI:17544"/>
        <dbReference type="ChEBI" id="CHEBI:33190"/>
        <dbReference type="ChEBI" id="CHEBI:57287"/>
        <dbReference type="ChEBI" id="CHEBI:57288"/>
        <dbReference type="ChEBI" id="CHEBI:57540"/>
        <dbReference type="ChEBI" id="CHEBI:57945"/>
        <dbReference type="EC" id="1.2.1.27"/>
    </reaction>
    <physiologicalReaction direction="left-to-right" evidence="1">
        <dbReference type="Rhea" id="RHEA:76616"/>
    </physiologicalReaction>
</comment>
<comment type="catalytic activity">
    <reaction evidence="1">
        <text>2-methyl-3-oxopropanoate + NAD(+) + CoA + H2O = propanoyl-CoA + hydrogencarbonate + NADH + H(+)</text>
        <dbReference type="Rhea" id="RHEA:20804"/>
        <dbReference type="ChEBI" id="CHEBI:15377"/>
        <dbReference type="ChEBI" id="CHEBI:15378"/>
        <dbReference type="ChEBI" id="CHEBI:17544"/>
        <dbReference type="ChEBI" id="CHEBI:57287"/>
        <dbReference type="ChEBI" id="CHEBI:57392"/>
        <dbReference type="ChEBI" id="CHEBI:57540"/>
        <dbReference type="ChEBI" id="CHEBI:57700"/>
        <dbReference type="ChEBI" id="CHEBI:57945"/>
        <dbReference type="EC" id="1.2.1.27"/>
    </reaction>
    <physiologicalReaction direction="left-to-right" evidence="1">
        <dbReference type="Rhea" id="RHEA:20805"/>
    </physiologicalReaction>
</comment>
<comment type="pathway">
    <text evidence="1">Polyol metabolism; myo-inositol degradation into acetyl-CoA; acetyl-CoA from myo-inositol: step 7/7.</text>
</comment>
<comment type="subunit">
    <text evidence="1">Homotetramer.</text>
</comment>
<comment type="similarity">
    <text evidence="1">Belongs to the aldehyde dehydrogenase family. IolA subfamily.</text>
</comment>
<organism>
    <name type="scientific">Bacillus anthracis</name>
    <dbReference type="NCBI Taxonomy" id="1392"/>
    <lineage>
        <taxon>Bacteria</taxon>
        <taxon>Bacillati</taxon>
        <taxon>Bacillota</taxon>
        <taxon>Bacilli</taxon>
        <taxon>Bacillales</taxon>
        <taxon>Bacillaceae</taxon>
        <taxon>Bacillus</taxon>
        <taxon>Bacillus cereus group</taxon>
    </lineage>
</organism>
<sequence>MITTEIKRVKNHINGEWVESTGTEVEAVPNPATGKIIAYVPLSPKEDVEKAVEAAKAAYETWSKVPVPNRSRQLYKYLQLLQENKEELAKIITLENGKTLTDATGEVQRGIEAVELATSAPNLMMGQALPNIASGIDGSIWRYPIGVVAGITPFNFPMMIPLWMFPLAIACGNTFVLKTSERTPLLAERLVELFYEAGFPKGVLNLVQGGKDVVNSILENKDIQAVSFVGSEPVARYVYETGTKHGKRVQALAGAKNHAIVMPDCNLEKTVQGVIGSAFASSGERCMACSVVAVVDEIADEFIDVLVAETKKLKVGDGFHEDNYVGPLIRESHKERVLGYINSGVADGATLLVDGRKIKEEVGEGYFVGATIFDGVNQEMKIWQDEIFAPVLSIVRVKDLEEGIKLTNQSKFANGAVIYTSNGKHAQTFRDNIDAGMIGVNVNVPAPMAFFAFAGNKASFFGDLGTNGTDGVQFYTRKKVVTERWF</sequence>
<accession>Q81QR5</accession>
<accession>Q6HYY4</accession>
<accession>Q6KSY3</accession>
<proteinExistence type="inferred from homology"/>
<dbReference type="EC" id="1.2.1.27" evidence="1"/>
<dbReference type="EMBL" id="AE016879">
    <property type="protein sequence ID" value="AAP26222.1"/>
    <property type="molecule type" value="Genomic_DNA"/>
</dbReference>
<dbReference type="EMBL" id="AE017334">
    <property type="protein sequence ID" value="AAT31473.1"/>
    <property type="molecule type" value="Genomic_DNA"/>
</dbReference>
<dbReference type="EMBL" id="AE017225">
    <property type="protein sequence ID" value="AAT54505.1"/>
    <property type="molecule type" value="Genomic_DNA"/>
</dbReference>
<dbReference type="RefSeq" id="NP_844736.1">
    <property type="nucleotide sequence ID" value="NC_003997.3"/>
</dbReference>
<dbReference type="RefSeq" id="WP_000633351.1">
    <property type="nucleotide sequence ID" value="NZ_WXXJ01000007.1"/>
</dbReference>
<dbReference type="RefSeq" id="YP_028454.1">
    <property type="nucleotide sequence ID" value="NC_005945.1"/>
</dbReference>
<dbReference type="SMR" id="Q81QR5"/>
<dbReference type="STRING" id="261594.GBAA_2354"/>
<dbReference type="DNASU" id="1089110"/>
<dbReference type="KEGG" id="ban:BA_2354"/>
<dbReference type="KEGG" id="bar:GBAA_2354"/>
<dbReference type="KEGG" id="bat:BAS2193"/>
<dbReference type="PATRIC" id="fig|198094.11.peg.2321"/>
<dbReference type="eggNOG" id="COG1012">
    <property type="taxonomic scope" value="Bacteria"/>
</dbReference>
<dbReference type="HOGENOM" id="CLU_005391_1_10_9"/>
<dbReference type="OMA" id="HHIYGND"/>
<dbReference type="OrthoDB" id="9762913at2"/>
<dbReference type="UniPathway" id="UPA00076">
    <property type="reaction ID" value="UER00148"/>
</dbReference>
<dbReference type="Proteomes" id="UP000000427">
    <property type="component" value="Chromosome"/>
</dbReference>
<dbReference type="Proteomes" id="UP000000594">
    <property type="component" value="Chromosome"/>
</dbReference>
<dbReference type="GO" id="GO:0018478">
    <property type="term" value="F:malonate-semialdehyde dehydrogenase (acetylating) activity"/>
    <property type="evidence" value="ECO:0007669"/>
    <property type="project" value="UniProtKB-UniRule"/>
</dbReference>
<dbReference type="GO" id="GO:0004491">
    <property type="term" value="F:methylmalonate-semialdehyde dehydrogenase (acylating, NAD) activity"/>
    <property type="evidence" value="ECO:0007669"/>
    <property type="project" value="UniProtKB-UniRule"/>
</dbReference>
<dbReference type="GO" id="GO:0019310">
    <property type="term" value="P:inositol catabolic process"/>
    <property type="evidence" value="ECO:0007669"/>
    <property type="project" value="UniProtKB-UniRule"/>
</dbReference>
<dbReference type="GO" id="GO:0006210">
    <property type="term" value="P:thymine catabolic process"/>
    <property type="evidence" value="ECO:0007669"/>
    <property type="project" value="TreeGrafter"/>
</dbReference>
<dbReference type="GO" id="GO:0006574">
    <property type="term" value="P:valine catabolic process"/>
    <property type="evidence" value="ECO:0007669"/>
    <property type="project" value="TreeGrafter"/>
</dbReference>
<dbReference type="CDD" id="cd07085">
    <property type="entry name" value="ALDH_F6_MMSDH"/>
    <property type="match status" value="1"/>
</dbReference>
<dbReference type="FunFam" id="3.40.309.10:FF:000002">
    <property type="entry name" value="Methylmalonate-semialdehyde dehydrogenase (Acylating)"/>
    <property type="match status" value="1"/>
</dbReference>
<dbReference type="FunFam" id="3.40.605.10:FF:000003">
    <property type="entry name" value="Methylmalonate-semialdehyde dehydrogenase [acylating]"/>
    <property type="match status" value="1"/>
</dbReference>
<dbReference type="Gene3D" id="3.40.605.10">
    <property type="entry name" value="Aldehyde Dehydrogenase, Chain A, domain 1"/>
    <property type="match status" value="1"/>
</dbReference>
<dbReference type="Gene3D" id="3.40.309.10">
    <property type="entry name" value="Aldehyde Dehydrogenase, Chain A, domain 2"/>
    <property type="match status" value="1"/>
</dbReference>
<dbReference type="HAMAP" id="MF_01670">
    <property type="entry name" value="IolA"/>
    <property type="match status" value="1"/>
</dbReference>
<dbReference type="InterPro" id="IPR016161">
    <property type="entry name" value="Ald_DH/histidinol_DH"/>
</dbReference>
<dbReference type="InterPro" id="IPR016163">
    <property type="entry name" value="Ald_DH_C"/>
</dbReference>
<dbReference type="InterPro" id="IPR016160">
    <property type="entry name" value="Ald_DH_CS_CYS"/>
</dbReference>
<dbReference type="InterPro" id="IPR016162">
    <property type="entry name" value="Ald_DH_N"/>
</dbReference>
<dbReference type="InterPro" id="IPR015590">
    <property type="entry name" value="Aldehyde_DH_dom"/>
</dbReference>
<dbReference type="InterPro" id="IPR010061">
    <property type="entry name" value="MeMal-semiAld_DH"/>
</dbReference>
<dbReference type="InterPro" id="IPR023510">
    <property type="entry name" value="MSDH_GmP_bac"/>
</dbReference>
<dbReference type="NCBIfam" id="TIGR01722">
    <property type="entry name" value="MMSDH"/>
    <property type="match status" value="1"/>
</dbReference>
<dbReference type="PANTHER" id="PTHR43866">
    <property type="entry name" value="MALONATE-SEMIALDEHYDE DEHYDROGENASE"/>
    <property type="match status" value="1"/>
</dbReference>
<dbReference type="PANTHER" id="PTHR43866:SF4">
    <property type="entry name" value="MALONATE-SEMIALDEHYDE DEHYDROGENASE"/>
    <property type="match status" value="1"/>
</dbReference>
<dbReference type="Pfam" id="PF00171">
    <property type="entry name" value="Aldedh"/>
    <property type="match status" value="1"/>
</dbReference>
<dbReference type="SUPFAM" id="SSF53720">
    <property type="entry name" value="ALDH-like"/>
    <property type="match status" value="1"/>
</dbReference>
<dbReference type="PROSITE" id="PS00070">
    <property type="entry name" value="ALDEHYDE_DEHYDR_CYS"/>
    <property type="match status" value="1"/>
</dbReference>
<feature type="chain" id="PRO_0000352318" description="Malonate-semialdehyde dehydrogenase 1">
    <location>
        <begin position="1"/>
        <end position="486"/>
    </location>
</feature>
<feature type="active site" description="Nucleophile" evidence="1">
    <location>
        <position position="286"/>
    </location>
</feature>
<feature type="binding site" evidence="1">
    <location>
        <position position="154"/>
    </location>
    <ligand>
        <name>NAD(+)</name>
        <dbReference type="ChEBI" id="CHEBI:57540"/>
    </ligand>
</feature>
<feature type="binding site" evidence="1">
    <location>
        <position position="178"/>
    </location>
    <ligand>
        <name>NAD(+)</name>
        <dbReference type="ChEBI" id="CHEBI:57540"/>
    </ligand>
</feature>
<feature type="binding site" evidence="1">
    <location>
        <position position="181"/>
    </location>
    <ligand>
        <name>NAD(+)</name>
        <dbReference type="ChEBI" id="CHEBI:57540"/>
    </ligand>
</feature>
<feature type="binding site" evidence="1">
    <location>
        <position position="182"/>
    </location>
    <ligand>
        <name>NAD(+)</name>
        <dbReference type="ChEBI" id="CHEBI:57540"/>
    </ligand>
</feature>
<feature type="binding site" evidence="1">
    <location>
        <position position="231"/>
    </location>
    <ligand>
        <name>NAD(+)</name>
        <dbReference type="ChEBI" id="CHEBI:57540"/>
    </ligand>
</feature>
<feature type="binding site" evidence="1">
    <location>
        <position position="386"/>
    </location>
    <ligand>
        <name>NAD(+)</name>
        <dbReference type="ChEBI" id="CHEBI:57540"/>
    </ligand>
</feature>